<gene>
    <name type="primary">psf3</name>
    <name type="ORF">SPAC227.16c</name>
</gene>
<proteinExistence type="inferred from homology"/>
<organism>
    <name type="scientific">Schizosaccharomyces pombe (strain 972 / ATCC 24843)</name>
    <name type="common">Fission yeast</name>
    <dbReference type="NCBI Taxonomy" id="284812"/>
    <lineage>
        <taxon>Eukaryota</taxon>
        <taxon>Fungi</taxon>
        <taxon>Dikarya</taxon>
        <taxon>Ascomycota</taxon>
        <taxon>Taphrinomycotina</taxon>
        <taxon>Schizosaccharomycetes</taxon>
        <taxon>Schizosaccharomycetales</taxon>
        <taxon>Schizosaccharomycetaceae</taxon>
        <taxon>Schizosaccharomyces</taxon>
    </lineage>
</organism>
<feature type="chain" id="PRO_0000132324" description="DNA replication complex GINS protein psf3">
    <location>
        <begin position="1"/>
        <end position="166"/>
    </location>
</feature>
<reference key="1">
    <citation type="journal article" date="2002" name="Nature">
        <title>The genome sequence of Schizosaccharomyces pombe.</title>
        <authorList>
            <person name="Wood V."/>
            <person name="Gwilliam R."/>
            <person name="Rajandream M.A."/>
            <person name="Lyne M.H."/>
            <person name="Lyne R."/>
            <person name="Stewart A."/>
            <person name="Sgouros J.G."/>
            <person name="Peat N."/>
            <person name="Hayles J."/>
            <person name="Baker S.G."/>
            <person name="Basham D."/>
            <person name="Bowman S."/>
            <person name="Brooks K."/>
            <person name="Brown D."/>
            <person name="Brown S."/>
            <person name="Chillingworth T."/>
            <person name="Churcher C.M."/>
            <person name="Collins M."/>
            <person name="Connor R."/>
            <person name="Cronin A."/>
            <person name="Davis P."/>
            <person name="Feltwell T."/>
            <person name="Fraser A."/>
            <person name="Gentles S."/>
            <person name="Goble A."/>
            <person name="Hamlin N."/>
            <person name="Harris D.E."/>
            <person name="Hidalgo J."/>
            <person name="Hodgson G."/>
            <person name="Holroyd S."/>
            <person name="Hornsby T."/>
            <person name="Howarth S."/>
            <person name="Huckle E.J."/>
            <person name="Hunt S."/>
            <person name="Jagels K."/>
            <person name="James K.D."/>
            <person name="Jones L."/>
            <person name="Jones M."/>
            <person name="Leather S."/>
            <person name="McDonald S."/>
            <person name="McLean J."/>
            <person name="Mooney P."/>
            <person name="Moule S."/>
            <person name="Mungall K.L."/>
            <person name="Murphy L.D."/>
            <person name="Niblett D."/>
            <person name="Odell C."/>
            <person name="Oliver K."/>
            <person name="O'Neil S."/>
            <person name="Pearson D."/>
            <person name="Quail M.A."/>
            <person name="Rabbinowitsch E."/>
            <person name="Rutherford K.M."/>
            <person name="Rutter S."/>
            <person name="Saunders D."/>
            <person name="Seeger K."/>
            <person name="Sharp S."/>
            <person name="Skelton J."/>
            <person name="Simmonds M.N."/>
            <person name="Squares R."/>
            <person name="Squares S."/>
            <person name="Stevens K."/>
            <person name="Taylor K."/>
            <person name="Taylor R.G."/>
            <person name="Tivey A."/>
            <person name="Walsh S.V."/>
            <person name="Warren T."/>
            <person name="Whitehead S."/>
            <person name="Woodward J.R."/>
            <person name="Volckaert G."/>
            <person name="Aert R."/>
            <person name="Robben J."/>
            <person name="Grymonprez B."/>
            <person name="Weltjens I."/>
            <person name="Vanstreels E."/>
            <person name="Rieger M."/>
            <person name="Schaefer M."/>
            <person name="Mueller-Auer S."/>
            <person name="Gabel C."/>
            <person name="Fuchs M."/>
            <person name="Duesterhoeft A."/>
            <person name="Fritzc C."/>
            <person name="Holzer E."/>
            <person name="Moestl D."/>
            <person name="Hilbert H."/>
            <person name="Borzym K."/>
            <person name="Langer I."/>
            <person name="Beck A."/>
            <person name="Lehrach H."/>
            <person name="Reinhardt R."/>
            <person name="Pohl T.M."/>
            <person name="Eger P."/>
            <person name="Zimmermann W."/>
            <person name="Wedler H."/>
            <person name="Wambutt R."/>
            <person name="Purnelle B."/>
            <person name="Goffeau A."/>
            <person name="Cadieu E."/>
            <person name="Dreano S."/>
            <person name="Gloux S."/>
            <person name="Lelaure V."/>
            <person name="Mottier S."/>
            <person name="Galibert F."/>
            <person name="Aves S.J."/>
            <person name="Xiang Z."/>
            <person name="Hunt C."/>
            <person name="Moore K."/>
            <person name="Hurst S.M."/>
            <person name="Lucas M."/>
            <person name="Rochet M."/>
            <person name="Gaillardin C."/>
            <person name="Tallada V.A."/>
            <person name="Garzon A."/>
            <person name="Thode G."/>
            <person name="Daga R.R."/>
            <person name="Cruzado L."/>
            <person name="Jimenez J."/>
            <person name="Sanchez M."/>
            <person name="del Rey F."/>
            <person name="Benito J."/>
            <person name="Dominguez A."/>
            <person name="Revuelta J.L."/>
            <person name="Moreno S."/>
            <person name="Armstrong J."/>
            <person name="Forsburg S.L."/>
            <person name="Cerutti L."/>
            <person name="Lowe T."/>
            <person name="McCombie W.R."/>
            <person name="Paulsen I."/>
            <person name="Potashkin J."/>
            <person name="Shpakovski G.V."/>
            <person name="Ussery D."/>
            <person name="Barrell B.G."/>
            <person name="Nurse P."/>
        </authorList>
    </citation>
    <scope>NUCLEOTIDE SEQUENCE [LARGE SCALE GENOMIC DNA]</scope>
    <source>
        <strain>972 / ATCC 24843</strain>
    </source>
</reference>
<reference key="2">
    <citation type="journal article" date="2006" name="Nat. Biotechnol.">
        <title>ORFeome cloning and global analysis of protein localization in the fission yeast Schizosaccharomyces pombe.</title>
        <authorList>
            <person name="Matsuyama A."/>
            <person name="Arai R."/>
            <person name="Yashiroda Y."/>
            <person name="Shirai A."/>
            <person name="Kamata A."/>
            <person name="Sekido S."/>
            <person name="Kobayashi Y."/>
            <person name="Hashimoto A."/>
            <person name="Hamamoto M."/>
            <person name="Hiraoka Y."/>
            <person name="Horinouchi S."/>
            <person name="Yoshida M."/>
        </authorList>
    </citation>
    <scope>SUBCELLULAR LOCATION [LARGE SCALE ANALYSIS]</scope>
</reference>
<protein>
    <recommendedName>
        <fullName>DNA replication complex GINS protein psf3</fullName>
    </recommendedName>
</protein>
<dbReference type="EMBL" id="CU329670">
    <property type="protein sequence ID" value="CAB61465.1"/>
    <property type="molecule type" value="Genomic_DNA"/>
</dbReference>
<dbReference type="PIR" id="T50172">
    <property type="entry name" value="T50172"/>
</dbReference>
<dbReference type="RefSeq" id="NP_592970.1">
    <property type="nucleotide sequence ID" value="NM_001018370.2"/>
</dbReference>
<dbReference type="SMR" id="Q9UTC3"/>
<dbReference type="BioGRID" id="277976">
    <property type="interactions" value="12"/>
</dbReference>
<dbReference type="FunCoup" id="Q9UTC3">
    <property type="interactions" value="202"/>
</dbReference>
<dbReference type="IntAct" id="Q9UTC3">
    <property type="interactions" value="1"/>
</dbReference>
<dbReference type="MINT" id="Q9UTC3"/>
<dbReference type="STRING" id="284812.Q9UTC3"/>
<dbReference type="PaxDb" id="4896-SPAC227.16c.1"/>
<dbReference type="EnsemblFungi" id="SPAC227.16c.1">
    <property type="protein sequence ID" value="SPAC227.16c.1:pep"/>
    <property type="gene ID" value="SPAC227.16c"/>
</dbReference>
<dbReference type="GeneID" id="2541474"/>
<dbReference type="KEGG" id="spo:2541474"/>
<dbReference type="PomBase" id="SPAC227.16c">
    <property type="gene designation" value="psf3"/>
</dbReference>
<dbReference type="VEuPathDB" id="FungiDB:SPAC227.16c"/>
<dbReference type="eggNOG" id="KOG1106">
    <property type="taxonomic scope" value="Eukaryota"/>
</dbReference>
<dbReference type="HOGENOM" id="CLU_081646_0_1_1"/>
<dbReference type="InParanoid" id="Q9UTC3"/>
<dbReference type="OMA" id="IYKEGWR"/>
<dbReference type="PhylomeDB" id="Q9UTC3"/>
<dbReference type="Reactome" id="R-SPO-176974">
    <property type="pathway name" value="Unwinding of DNA"/>
</dbReference>
<dbReference type="PRO" id="PR:Q9UTC3"/>
<dbReference type="Proteomes" id="UP000002485">
    <property type="component" value="Chromosome I"/>
</dbReference>
<dbReference type="GO" id="GO:0000785">
    <property type="term" value="C:chromatin"/>
    <property type="evidence" value="ECO:0000314"/>
    <property type="project" value="PomBase"/>
</dbReference>
<dbReference type="GO" id="GO:0005737">
    <property type="term" value="C:cytoplasm"/>
    <property type="evidence" value="ECO:0007005"/>
    <property type="project" value="PomBase"/>
</dbReference>
<dbReference type="GO" id="GO:0000811">
    <property type="term" value="C:GINS complex"/>
    <property type="evidence" value="ECO:0000318"/>
    <property type="project" value="GO_Central"/>
</dbReference>
<dbReference type="GO" id="GO:0043596">
    <property type="term" value="C:nuclear replication fork"/>
    <property type="evidence" value="ECO:0000305"/>
    <property type="project" value="PomBase"/>
</dbReference>
<dbReference type="GO" id="GO:0005634">
    <property type="term" value="C:nucleus"/>
    <property type="evidence" value="ECO:0000314"/>
    <property type="project" value="PomBase"/>
</dbReference>
<dbReference type="GO" id="GO:0006270">
    <property type="term" value="P:DNA replication initiation"/>
    <property type="evidence" value="ECO:0000315"/>
    <property type="project" value="PomBase"/>
</dbReference>
<dbReference type="GO" id="GO:1902975">
    <property type="term" value="P:mitotic DNA replication initiation"/>
    <property type="evidence" value="ECO:0000318"/>
    <property type="project" value="GO_Central"/>
</dbReference>
<dbReference type="CDD" id="cd11713">
    <property type="entry name" value="GINS_A_psf3"/>
    <property type="match status" value="1"/>
</dbReference>
<dbReference type="CDD" id="cd21693">
    <property type="entry name" value="GINS_B_Psf3"/>
    <property type="match status" value="1"/>
</dbReference>
<dbReference type="Gene3D" id="1.20.58.2050">
    <property type="match status" value="1"/>
</dbReference>
<dbReference type="InterPro" id="IPR021151">
    <property type="entry name" value="GINS_A"/>
</dbReference>
<dbReference type="InterPro" id="IPR036224">
    <property type="entry name" value="GINS_bundle-like_dom_sf"/>
</dbReference>
<dbReference type="InterPro" id="IPR010492">
    <property type="entry name" value="GINS_Psf3"/>
</dbReference>
<dbReference type="InterPro" id="IPR038437">
    <property type="entry name" value="GINS_Psf3_sf"/>
</dbReference>
<dbReference type="InterPro" id="IPR055221">
    <property type="entry name" value="PSF3_N"/>
</dbReference>
<dbReference type="PANTHER" id="PTHR22768">
    <property type="entry name" value="DNA REPLICATION COMPLEX GINS PROTEIN PSF3"/>
    <property type="match status" value="1"/>
</dbReference>
<dbReference type="PANTHER" id="PTHR22768:SF0">
    <property type="entry name" value="DNA REPLICATION COMPLEX GINS PROTEIN PSF3"/>
    <property type="match status" value="1"/>
</dbReference>
<dbReference type="Pfam" id="PF22466">
    <property type="entry name" value="PSF3_N"/>
    <property type="match status" value="1"/>
</dbReference>
<dbReference type="Pfam" id="PF05916">
    <property type="entry name" value="Sld5"/>
    <property type="match status" value="1"/>
</dbReference>
<dbReference type="SUPFAM" id="SSF158573">
    <property type="entry name" value="GINS helical bundle-like"/>
    <property type="match status" value="1"/>
</dbReference>
<dbReference type="SUPFAM" id="SSF160059">
    <property type="entry name" value="PriA/YqbF domain"/>
    <property type="match status" value="1"/>
</dbReference>
<evidence type="ECO:0000250" key="1"/>
<evidence type="ECO:0000269" key="2">
    <source>
    </source>
</evidence>
<evidence type="ECO:0000305" key="3"/>
<comment type="function">
    <text evidence="1">The GINS complex plays an essential role in the initiation of DNA replication.</text>
</comment>
<comment type="subunit">
    <text evidence="1">Component of the GINS complex which is a heterotetramer of sld5, psf1, psf2 and psf3.</text>
</comment>
<comment type="subcellular location">
    <subcellularLocation>
        <location evidence="2">Cytoplasm</location>
    </subcellularLocation>
    <subcellularLocation>
        <location evidence="2">Nucleus</location>
    </subcellularLocation>
</comment>
<comment type="similarity">
    <text evidence="3">Belongs to the GINS3/PSF3 family.</text>
</comment>
<accession>Q9UTC3</accession>
<sequence>MDYYDIDSILSENQKVPCTSTVSIPGLGHEGRMVPTGSKVELPFWLAEVLAINSFVSIHMPAPFSSVVRNALKANPNSVSIRDITTHYYHFAEKMLHLISDDSLVQISLNTLRSRAMLIADASLNPQGALQQNSQFIEGLDDFEKHILRVSHNAHRSLINWQNSTS</sequence>
<keyword id="KW-0963">Cytoplasm</keyword>
<keyword id="KW-0235">DNA replication</keyword>
<keyword id="KW-0539">Nucleus</keyword>
<keyword id="KW-1185">Reference proteome</keyword>
<name>PSF3_SCHPO</name>